<keyword id="KW-0175">Coiled coil</keyword>
<keyword id="KW-0378">Hydrolase</keyword>
<keyword id="KW-0645">Protease</keyword>
<keyword id="KW-1185">Reference proteome</keyword>
<keyword id="KW-0788">Thiol protease</keyword>
<keyword id="KW-0833">Ubl conjugation pathway</keyword>
<proteinExistence type="evidence at protein level"/>
<dbReference type="EC" id="3.4.19.12"/>
<dbReference type="EMBL" id="AF327414">
    <property type="protein sequence ID" value="AAL04454.1"/>
    <property type="molecule type" value="Genomic_DNA"/>
</dbReference>
<dbReference type="EMBL" id="AACD01000061">
    <property type="protein sequence ID" value="EAA59795.1"/>
    <property type="molecule type" value="Genomic_DNA"/>
</dbReference>
<dbReference type="EMBL" id="BN001302">
    <property type="protein sequence ID" value="CBF75829.1"/>
    <property type="molecule type" value="Genomic_DNA"/>
</dbReference>
<dbReference type="RefSeq" id="XP_661191.1">
    <property type="nucleotide sequence ID" value="XM_656099.1"/>
</dbReference>
<dbReference type="SMR" id="Q96V54"/>
<dbReference type="FunCoup" id="Q96V54">
    <property type="interactions" value="388"/>
</dbReference>
<dbReference type="STRING" id="227321.Q96V54"/>
<dbReference type="EnsemblFungi" id="CBF75829">
    <property type="protein sequence ID" value="CBF75829"/>
    <property type="gene ID" value="ANIA_03587"/>
</dbReference>
<dbReference type="KEGG" id="ani:ANIA_03587"/>
<dbReference type="VEuPathDB" id="FungiDB:AN3587"/>
<dbReference type="eggNOG" id="KOG1864">
    <property type="taxonomic scope" value="Eukaryota"/>
</dbReference>
<dbReference type="HOGENOM" id="CLU_008279_0_1_1"/>
<dbReference type="InParanoid" id="Q96V54"/>
<dbReference type="OMA" id="PVLQMDY"/>
<dbReference type="OrthoDB" id="27652at2759"/>
<dbReference type="Proteomes" id="UP000000560">
    <property type="component" value="Chromosome II"/>
</dbReference>
<dbReference type="GO" id="GO:0005829">
    <property type="term" value="C:cytosol"/>
    <property type="evidence" value="ECO:0000318"/>
    <property type="project" value="GO_Central"/>
</dbReference>
<dbReference type="GO" id="GO:0005634">
    <property type="term" value="C:nucleus"/>
    <property type="evidence" value="ECO:0000318"/>
    <property type="project" value="GO_Central"/>
</dbReference>
<dbReference type="GO" id="GO:0004843">
    <property type="term" value="F:cysteine-type deubiquitinase activity"/>
    <property type="evidence" value="ECO:0000314"/>
    <property type="project" value="UniProtKB"/>
</dbReference>
<dbReference type="GO" id="GO:0045013">
    <property type="term" value="P:carbon catabolite repression of transcription"/>
    <property type="evidence" value="ECO:0000315"/>
    <property type="project" value="UniProtKB"/>
</dbReference>
<dbReference type="GO" id="GO:0016579">
    <property type="term" value="P:protein deubiquitination"/>
    <property type="evidence" value="ECO:0007669"/>
    <property type="project" value="InterPro"/>
</dbReference>
<dbReference type="GO" id="GO:0031647">
    <property type="term" value="P:regulation of protein stability"/>
    <property type="evidence" value="ECO:0000318"/>
    <property type="project" value="GO_Central"/>
</dbReference>
<dbReference type="GO" id="GO:0006511">
    <property type="term" value="P:ubiquitin-dependent protein catabolic process"/>
    <property type="evidence" value="ECO:0000314"/>
    <property type="project" value="UniProtKB"/>
</dbReference>
<dbReference type="CDD" id="cd02663">
    <property type="entry name" value="Peptidase_C19G"/>
    <property type="match status" value="1"/>
</dbReference>
<dbReference type="FunFam" id="3.90.70.10:FF:000075">
    <property type="entry name" value="Ubiquitin carboxyl-terminal hydrolase creB"/>
    <property type="match status" value="1"/>
</dbReference>
<dbReference type="Gene3D" id="3.90.70.10">
    <property type="entry name" value="Cysteine proteinases"/>
    <property type="match status" value="1"/>
</dbReference>
<dbReference type="InterPro" id="IPR038765">
    <property type="entry name" value="Papain-like_cys_pep_sf"/>
</dbReference>
<dbReference type="InterPro" id="IPR050164">
    <property type="entry name" value="Peptidase_C19"/>
</dbReference>
<dbReference type="InterPro" id="IPR001394">
    <property type="entry name" value="Peptidase_C19_UCH"/>
</dbReference>
<dbReference type="InterPro" id="IPR018200">
    <property type="entry name" value="USP_CS"/>
</dbReference>
<dbReference type="InterPro" id="IPR028889">
    <property type="entry name" value="USP_dom"/>
</dbReference>
<dbReference type="PANTHER" id="PTHR24006:SF733">
    <property type="entry name" value="RE52890P"/>
    <property type="match status" value="1"/>
</dbReference>
<dbReference type="PANTHER" id="PTHR24006">
    <property type="entry name" value="UBIQUITIN CARBOXYL-TERMINAL HYDROLASE"/>
    <property type="match status" value="1"/>
</dbReference>
<dbReference type="Pfam" id="PF00443">
    <property type="entry name" value="UCH"/>
    <property type="match status" value="1"/>
</dbReference>
<dbReference type="SUPFAM" id="SSF54001">
    <property type="entry name" value="Cysteine proteinases"/>
    <property type="match status" value="1"/>
</dbReference>
<dbReference type="PROSITE" id="PS00972">
    <property type="entry name" value="USP_1"/>
    <property type="match status" value="1"/>
</dbReference>
<dbReference type="PROSITE" id="PS00973">
    <property type="entry name" value="USP_2"/>
    <property type="match status" value="1"/>
</dbReference>
<dbReference type="PROSITE" id="PS50235">
    <property type="entry name" value="USP_3"/>
    <property type="match status" value="1"/>
</dbReference>
<evidence type="ECO:0000255" key="1"/>
<evidence type="ECO:0000255" key="2">
    <source>
        <dbReference type="PROSITE-ProRule" id="PRU10092"/>
    </source>
</evidence>
<evidence type="ECO:0000255" key="3">
    <source>
        <dbReference type="PROSITE-ProRule" id="PRU10093"/>
    </source>
</evidence>
<evidence type="ECO:0000256" key="4">
    <source>
        <dbReference type="SAM" id="MobiDB-lite"/>
    </source>
</evidence>
<evidence type="ECO:0000269" key="5">
    <source>
    </source>
</evidence>
<evidence type="ECO:0000269" key="6">
    <source>
    </source>
</evidence>
<evidence type="ECO:0000269" key="7">
    <source>
    </source>
</evidence>
<evidence type="ECO:0000269" key="8">
    <source>
    </source>
</evidence>
<evidence type="ECO:0000269" key="9">
    <source>
    </source>
</evidence>
<evidence type="ECO:0000269" key="10">
    <source ref="8"/>
</evidence>
<evidence type="ECO:0000305" key="11"/>
<comment type="function">
    <text evidence="5 6 7 8 9 10">Ubiquitin thioesterase component of the regulatory network controlling carbon source utilization through ubiquitination and deubiquitination involving creA, creB, creC, creD and acrB. Deubiquitinates the creA catabolic repressor and the quinate permease qutD. Also plays a role in response to carbon starvation and the control of extracellular proteases activity.</text>
</comment>
<comment type="catalytic activity">
    <reaction>
        <text>Thiol-dependent hydrolysis of ester, thioester, amide, peptide and isopeptide bonds formed by the C-terminal Gly of ubiquitin (a 76-residue protein attached to proteins as an intracellular targeting signal).</text>
        <dbReference type="EC" id="3.4.19.12"/>
    </reaction>
</comment>
<comment type="subunit">
    <text evidence="7 10">Interacts with creA, creC and qutD.</text>
</comment>
<comment type="similarity">
    <text evidence="11">Belongs to the peptidase C19 family.</text>
</comment>
<reference key="1">
    <citation type="journal article" date="2001" name="Mol. Microbiol.">
        <title>Carbon catabolite repression in Aspergillus nidulans involves deubiquitination.</title>
        <authorList>
            <person name="Lockington R.A."/>
            <person name="Kelly J.M."/>
        </authorList>
    </citation>
    <scope>NUCLEOTIDE SEQUENCE [GENOMIC DNA]</scope>
    <scope>FUNCTION</scope>
</reference>
<reference key="2">
    <citation type="journal article" date="2005" name="Nature">
        <title>Sequencing of Aspergillus nidulans and comparative analysis with A. fumigatus and A. oryzae.</title>
        <authorList>
            <person name="Galagan J.E."/>
            <person name="Calvo S.E."/>
            <person name="Cuomo C."/>
            <person name="Ma L.-J."/>
            <person name="Wortman J.R."/>
            <person name="Batzoglou S."/>
            <person name="Lee S.-I."/>
            <person name="Bastuerkmen M."/>
            <person name="Spevak C.C."/>
            <person name="Clutterbuck J."/>
            <person name="Kapitonov V."/>
            <person name="Jurka J."/>
            <person name="Scazzocchio C."/>
            <person name="Farman M.L."/>
            <person name="Butler J."/>
            <person name="Purcell S."/>
            <person name="Harris S."/>
            <person name="Braus G.H."/>
            <person name="Draht O."/>
            <person name="Busch S."/>
            <person name="D'Enfert C."/>
            <person name="Bouchier C."/>
            <person name="Goldman G.H."/>
            <person name="Bell-Pedersen D."/>
            <person name="Griffiths-Jones S."/>
            <person name="Doonan J.H."/>
            <person name="Yu J."/>
            <person name="Vienken K."/>
            <person name="Pain A."/>
            <person name="Freitag M."/>
            <person name="Selker E.U."/>
            <person name="Archer D.B."/>
            <person name="Penalva M.A."/>
            <person name="Oakley B.R."/>
            <person name="Momany M."/>
            <person name="Tanaka T."/>
            <person name="Kumagai T."/>
            <person name="Asai K."/>
            <person name="Machida M."/>
            <person name="Nierman W.C."/>
            <person name="Denning D.W."/>
            <person name="Caddick M.X."/>
            <person name="Hynes M."/>
            <person name="Paoletti M."/>
            <person name="Fischer R."/>
            <person name="Miller B.L."/>
            <person name="Dyer P.S."/>
            <person name="Sachs M.S."/>
            <person name="Osmani S.A."/>
            <person name="Birren B.W."/>
        </authorList>
    </citation>
    <scope>NUCLEOTIDE SEQUENCE [LARGE SCALE GENOMIC DNA]</scope>
    <source>
        <strain>FGSC A4 / ATCC 38163 / CBS 112.46 / NRRL 194 / M139</strain>
    </source>
</reference>
<reference key="3">
    <citation type="journal article" date="2009" name="Fungal Genet. Biol.">
        <title>The 2008 update of the Aspergillus nidulans genome annotation: a community effort.</title>
        <authorList>
            <person name="Wortman J.R."/>
            <person name="Gilsenan J.M."/>
            <person name="Joardar V."/>
            <person name="Deegan J."/>
            <person name="Clutterbuck J."/>
            <person name="Andersen M.R."/>
            <person name="Archer D."/>
            <person name="Bencina M."/>
            <person name="Braus G."/>
            <person name="Coutinho P."/>
            <person name="von Dohren H."/>
            <person name="Doonan J."/>
            <person name="Driessen A.J."/>
            <person name="Durek P."/>
            <person name="Espeso E."/>
            <person name="Fekete E."/>
            <person name="Flipphi M."/>
            <person name="Estrada C.G."/>
            <person name="Geysens S."/>
            <person name="Goldman G."/>
            <person name="de Groot P.W."/>
            <person name="Hansen K."/>
            <person name="Harris S.D."/>
            <person name="Heinekamp T."/>
            <person name="Helmstaedt K."/>
            <person name="Henrissat B."/>
            <person name="Hofmann G."/>
            <person name="Homan T."/>
            <person name="Horio T."/>
            <person name="Horiuchi H."/>
            <person name="James S."/>
            <person name="Jones M."/>
            <person name="Karaffa L."/>
            <person name="Karanyi Z."/>
            <person name="Kato M."/>
            <person name="Keller N."/>
            <person name="Kelly D.E."/>
            <person name="Kiel J.A."/>
            <person name="Kim J.M."/>
            <person name="van der Klei I.J."/>
            <person name="Klis F.M."/>
            <person name="Kovalchuk A."/>
            <person name="Krasevec N."/>
            <person name="Kubicek C.P."/>
            <person name="Liu B."/>
            <person name="Maccabe A."/>
            <person name="Meyer V."/>
            <person name="Mirabito P."/>
            <person name="Miskei M."/>
            <person name="Mos M."/>
            <person name="Mullins J."/>
            <person name="Nelson D.R."/>
            <person name="Nielsen J."/>
            <person name="Oakley B.R."/>
            <person name="Osmani S.A."/>
            <person name="Pakula T."/>
            <person name="Paszewski A."/>
            <person name="Paulsen I."/>
            <person name="Pilsyk S."/>
            <person name="Pocsi I."/>
            <person name="Punt P.J."/>
            <person name="Ram A.F."/>
            <person name="Ren Q."/>
            <person name="Robellet X."/>
            <person name="Robson G."/>
            <person name="Seiboth B."/>
            <person name="van Solingen P."/>
            <person name="Specht T."/>
            <person name="Sun J."/>
            <person name="Taheri-Talesh N."/>
            <person name="Takeshita N."/>
            <person name="Ussery D."/>
            <person name="vanKuyk P.A."/>
            <person name="Visser H."/>
            <person name="van de Vondervoort P.J."/>
            <person name="de Vries R.P."/>
            <person name="Walton J."/>
            <person name="Xiang X."/>
            <person name="Xiong Y."/>
            <person name="Zeng A.P."/>
            <person name="Brandt B.W."/>
            <person name="Cornell M.J."/>
            <person name="van den Hondel C.A."/>
            <person name="Visser J."/>
            <person name="Oliver S.G."/>
            <person name="Turner G."/>
        </authorList>
    </citation>
    <scope>GENOME REANNOTATION</scope>
    <source>
        <strain>FGSC A4 / ATCC 38163 / CBS 112.46 / NRRL 194 / M139</strain>
    </source>
</reference>
<reference key="4">
    <citation type="journal article" date="1999" name="Mol. Microbiol.">
        <title>The function of CreA, the carbon catabolite repressor of Aspergillus nidulans, is regulated at the transcriptional and post-transcriptional level.</title>
        <authorList>
            <person name="Strauss J."/>
            <person name="Horvath H.K."/>
            <person name="Abdallah B.M."/>
            <person name="Kindermann J."/>
            <person name="Mach R.L."/>
            <person name="Kubicek C.P."/>
        </authorList>
    </citation>
    <scope>FUNCTION</scope>
</reference>
<reference key="5">
    <citation type="journal article" date="2002" name="Mol. Microbiol.">
        <title>The WD40-repeat protein CreC interacts with and stabilizes the deubiquitinating enzyme CreB in vivo in Aspergillus nidulans.</title>
        <authorList>
            <person name="Lockington R.A."/>
            <person name="Kelly J.M."/>
        </authorList>
    </citation>
    <scope>FUNCTION</scope>
    <scope>INTERACTION WITH CREC</scope>
</reference>
<reference key="6">
    <citation type="journal article" date="2003" name="Genetics">
        <title>Molecular characterization and analysis of the acrB gene of Aspergillus nidulans: a gene identified by genetic interaction as a component of the regulatory network that includes the CreB deubiquitination enzyme.</title>
        <authorList>
            <person name="Boase N.A."/>
            <person name="Lockington R.A."/>
            <person name="Adams J.R."/>
            <person name="Rodbourn L."/>
            <person name="Kelly J.M."/>
        </authorList>
    </citation>
    <scope>FUNCTION</scope>
</reference>
<reference key="7">
    <citation type="journal article" date="2008" name="Curr. Genet.">
        <title>The interaction of induction, repression and starvation in the regulation of extracellular proteases in Aspergillus nidulans: evidence for a role for CreA in the response to carbon starvation.</title>
        <authorList>
            <person name="Katz M.E."/>
            <person name="Bernardo S.M."/>
            <person name="Cheetham B.F."/>
        </authorList>
    </citation>
    <scope>FUNCTION</scope>
</reference>
<reference key="8">
    <citation type="thesis" date="2008" institute="University of Adelaide" country="Australia">
        <title>Identifying target proteins of the CreB deubiquitination enzyme in the fungus Aspergillus nidulans.</title>
        <authorList>
            <person name="Kamlangdee N."/>
        </authorList>
    </citation>
    <scope>INTERACTION WITH CREA AND QUTD</scope>
    <scope>FUNCTION</scope>
</reference>
<name>CREB_EMENI</name>
<accession>Q96V54</accession>
<accession>C8V4E2</accession>
<accession>Q5B793</accession>
<sequence length="766" mass="86229">MGSFLKSFRKDVGSAAPSVGAPPAKKEPQPLPMTPLEKMLTELGPIRGDGSDKFYGMENFGNTCYCNSILQCLYYSVPFREAVLNYPKRTPIEDLEAALAKALRYQDPNARLEAEALAEKQKAANSPRPGQPPNPQQKPEDKDSPEYKKKLALQTLPLLETTDNSVSYGIPESLFSSLKDMFESIVGSQSRIGIIRPQHFLEVLRRENEMFRTAMHQDAHEFLNLLLNEVVVDVEKAAAKLLESPQPASDVSDSVIPSSSSGSRTPNTTRWVHELFEGLLTSETQCLTCEKASQRDEVFLDLSVDLEQHSSVTSCLRKFSAEEMLCERNKFHCDNCGGLQEAEKRMKIKRLPRILALHLKRFKYTEDLQRLQKLFHRVVYPYHLRLFNTTDDAEDPDRLYELYAVVVHIGGGPYHGHYVSIIKTQDRGWLLFDDEMVEPVDKNYVRNFFGDKPGLACAYVLFYQETTMEAVMKEQEQENTEPPVEVNASTLKQNGFSSSATLAHAHSASQVPTYEDHDRFTGLKRAPTAPQLSTHPEHTTTDSESLPSPAPDPAPLTSLPPIPPIPETPPAPLTSRKSDLQSKKERVKEEKERKAAEKEKEKQRRKEIETRLKDRQRREDDDLKAALEASKVSKEDEDRRNHAENGTSKKNAGGLGRFRSLSQRLSTKESRTSLSRIPPLPNGNHTLSKVPDESEQTHPKSPTPPAPLSRPASQPLNDDLLGSPRADTLAVPTEQEHIKNSKHDRSSHGKWRSFSLRKKSFNILSS</sequence>
<gene>
    <name type="primary">creB</name>
    <name type="synonym">molB</name>
    <name type="ORF">AN3587</name>
</gene>
<protein>
    <recommendedName>
        <fullName>Ubiquitin carboxyl-terminal hydrolase creB</fullName>
        <ecNumber>3.4.19.12</ecNumber>
    </recommendedName>
    <alternativeName>
        <fullName>Carbon catabolite repression protein B</fullName>
    </alternativeName>
    <alternativeName>
        <fullName>Deubiquitinating enzyme creB</fullName>
    </alternativeName>
    <alternativeName>
        <fullName>Ubiquitin thioesterase creB</fullName>
    </alternativeName>
    <alternativeName>
        <fullName>Ubiquitin-hydrolyzing enzyme creB</fullName>
    </alternativeName>
    <alternativeName>
        <fullName>Ubiquitin-specific-processing protease creB</fullName>
    </alternativeName>
</protein>
<feature type="chain" id="PRO_0000395684" description="Ubiquitin carboxyl-terminal hydrolase creB">
    <location>
        <begin position="1"/>
        <end position="766"/>
    </location>
</feature>
<feature type="domain" description="USP">
    <location>
        <begin position="55"/>
        <end position="466"/>
    </location>
</feature>
<feature type="region of interest" description="Disordered" evidence="4">
    <location>
        <begin position="1"/>
        <end position="32"/>
    </location>
</feature>
<feature type="region of interest" description="Disordered" evidence="4">
    <location>
        <begin position="115"/>
        <end position="145"/>
    </location>
</feature>
<feature type="region of interest" description="Disordered" evidence="4">
    <location>
        <begin position="243"/>
        <end position="266"/>
    </location>
</feature>
<feature type="region of interest" description="Disordered" evidence="4">
    <location>
        <begin position="526"/>
        <end position="752"/>
    </location>
</feature>
<feature type="coiled-coil region" evidence="1">
    <location>
        <begin position="573"/>
        <end position="620"/>
    </location>
</feature>
<feature type="compositionally biased region" description="Low complexity" evidence="4">
    <location>
        <begin position="13"/>
        <end position="23"/>
    </location>
</feature>
<feature type="compositionally biased region" description="Low complexity" evidence="4">
    <location>
        <begin position="249"/>
        <end position="263"/>
    </location>
</feature>
<feature type="compositionally biased region" description="Pro residues" evidence="4">
    <location>
        <begin position="548"/>
        <end position="572"/>
    </location>
</feature>
<feature type="compositionally biased region" description="Basic and acidic residues" evidence="4">
    <location>
        <begin position="576"/>
        <end position="643"/>
    </location>
</feature>
<feature type="compositionally biased region" description="Basic and acidic residues" evidence="4">
    <location>
        <begin position="734"/>
        <end position="747"/>
    </location>
</feature>
<feature type="active site" description="Nucleophile" evidence="2 3">
    <location>
        <position position="64"/>
    </location>
</feature>
<feature type="active site" description="Proton acceptor" evidence="2 3">
    <location>
        <position position="417"/>
    </location>
</feature>
<organism>
    <name type="scientific">Emericella nidulans (strain FGSC A4 / ATCC 38163 / CBS 112.46 / NRRL 194 / M139)</name>
    <name type="common">Aspergillus nidulans</name>
    <dbReference type="NCBI Taxonomy" id="227321"/>
    <lineage>
        <taxon>Eukaryota</taxon>
        <taxon>Fungi</taxon>
        <taxon>Dikarya</taxon>
        <taxon>Ascomycota</taxon>
        <taxon>Pezizomycotina</taxon>
        <taxon>Eurotiomycetes</taxon>
        <taxon>Eurotiomycetidae</taxon>
        <taxon>Eurotiales</taxon>
        <taxon>Aspergillaceae</taxon>
        <taxon>Aspergillus</taxon>
        <taxon>Aspergillus subgen. Nidulantes</taxon>
    </lineage>
</organism>